<protein>
    <recommendedName>
        <fullName evidence="1">Cell division protein ZapB</fullName>
    </recommendedName>
</protein>
<evidence type="ECO:0000255" key="1">
    <source>
        <dbReference type="HAMAP-Rule" id="MF_01196"/>
    </source>
</evidence>
<gene>
    <name evidence="1" type="primary">zapB</name>
    <name type="ordered locus">plu4766</name>
</gene>
<proteinExistence type="inferred from homology"/>
<name>ZAPB_PHOLL</name>
<reference key="1">
    <citation type="journal article" date="2003" name="Nat. Biotechnol.">
        <title>The genome sequence of the entomopathogenic bacterium Photorhabdus luminescens.</title>
        <authorList>
            <person name="Duchaud E."/>
            <person name="Rusniok C."/>
            <person name="Frangeul L."/>
            <person name="Buchrieser C."/>
            <person name="Givaudan A."/>
            <person name="Taourit S."/>
            <person name="Bocs S."/>
            <person name="Boursaux-Eude C."/>
            <person name="Chandler M."/>
            <person name="Charles J.-F."/>
            <person name="Dassa E."/>
            <person name="Derose R."/>
            <person name="Derzelle S."/>
            <person name="Freyssinet G."/>
            <person name="Gaudriault S."/>
            <person name="Medigue C."/>
            <person name="Lanois A."/>
            <person name="Powell K."/>
            <person name="Siguier P."/>
            <person name="Vincent R."/>
            <person name="Wingate V."/>
            <person name="Zouine M."/>
            <person name="Glaser P."/>
            <person name="Boemare N."/>
            <person name="Danchin A."/>
            <person name="Kunst F."/>
        </authorList>
    </citation>
    <scope>NUCLEOTIDE SEQUENCE [LARGE SCALE GENOMIC DNA]</scope>
    <source>
        <strain>DSM 15139 / CIP 105565 / TT01</strain>
    </source>
</reference>
<accession>Q7MYB8</accession>
<keyword id="KW-0131">Cell cycle</keyword>
<keyword id="KW-0132">Cell division</keyword>
<keyword id="KW-0175">Coiled coil</keyword>
<keyword id="KW-0963">Cytoplasm</keyword>
<keyword id="KW-1185">Reference proteome</keyword>
<keyword id="KW-0717">Septation</keyword>
<sequence>MSFEVFEKLEAKVQQAIDTITLLQMEIEELKEKNRSLSQEIQNATSGRESLAHENEQLKQEQQVWQERLRALLGKMEDVQ</sequence>
<dbReference type="EMBL" id="BX571874">
    <property type="protein sequence ID" value="CAE17138.1"/>
    <property type="molecule type" value="Genomic_DNA"/>
</dbReference>
<dbReference type="RefSeq" id="WP_011148831.1">
    <property type="nucleotide sequence ID" value="NC_005126.1"/>
</dbReference>
<dbReference type="SMR" id="Q7MYB8"/>
<dbReference type="STRING" id="243265.plu4766"/>
<dbReference type="GeneID" id="88807915"/>
<dbReference type="KEGG" id="plu:plu4766"/>
<dbReference type="eggNOG" id="COG3074">
    <property type="taxonomic scope" value="Bacteria"/>
</dbReference>
<dbReference type="HOGENOM" id="CLU_171174_2_0_6"/>
<dbReference type="OrthoDB" id="6554593at2"/>
<dbReference type="Proteomes" id="UP000002514">
    <property type="component" value="Chromosome"/>
</dbReference>
<dbReference type="GO" id="GO:0005737">
    <property type="term" value="C:cytoplasm"/>
    <property type="evidence" value="ECO:0007669"/>
    <property type="project" value="UniProtKB-SubCell"/>
</dbReference>
<dbReference type="GO" id="GO:0000917">
    <property type="term" value="P:division septum assembly"/>
    <property type="evidence" value="ECO:0007669"/>
    <property type="project" value="UniProtKB-KW"/>
</dbReference>
<dbReference type="GO" id="GO:0043093">
    <property type="term" value="P:FtsZ-dependent cytokinesis"/>
    <property type="evidence" value="ECO:0007669"/>
    <property type="project" value="UniProtKB-UniRule"/>
</dbReference>
<dbReference type="Gene3D" id="1.20.5.340">
    <property type="match status" value="1"/>
</dbReference>
<dbReference type="HAMAP" id="MF_01196">
    <property type="entry name" value="ZapB"/>
    <property type="match status" value="1"/>
</dbReference>
<dbReference type="InterPro" id="IPR009252">
    <property type="entry name" value="Cell_div_ZapB"/>
</dbReference>
<dbReference type="NCBIfam" id="NF011951">
    <property type="entry name" value="PRK15422.1"/>
    <property type="match status" value="1"/>
</dbReference>
<dbReference type="Pfam" id="PF06005">
    <property type="entry name" value="ZapB"/>
    <property type="match status" value="1"/>
</dbReference>
<comment type="function">
    <text evidence="1">Non-essential, abundant cell division factor that is required for proper Z-ring formation. It is recruited early to the divisome by direct interaction with FtsZ, stimulating Z-ring assembly and thereby promoting cell division earlier in the cell cycle. Its recruitment to the Z-ring requires functional FtsA or ZipA.</text>
</comment>
<comment type="subunit">
    <text evidence="1">Homodimer. The ends of the coiled-coil dimer bind to each other, forming polymers. Interacts with FtsZ.</text>
</comment>
<comment type="subcellular location">
    <subcellularLocation>
        <location>Cytoplasm</location>
    </subcellularLocation>
    <text evidence="1">Localizes to the septum at mid-cell, in a FtsZ-like pattern.</text>
</comment>
<comment type="similarity">
    <text evidence="1">Belongs to the ZapB family.</text>
</comment>
<organism>
    <name type="scientific">Photorhabdus laumondii subsp. laumondii (strain DSM 15139 / CIP 105565 / TT01)</name>
    <name type="common">Photorhabdus luminescens subsp. laumondii</name>
    <dbReference type="NCBI Taxonomy" id="243265"/>
    <lineage>
        <taxon>Bacteria</taxon>
        <taxon>Pseudomonadati</taxon>
        <taxon>Pseudomonadota</taxon>
        <taxon>Gammaproteobacteria</taxon>
        <taxon>Enterobacterales</taxon>
        <taxon>Morganellaceae</taxon>
        <taxon>Photorhabdus</taxon>
    </lineage>
</organism>
<feature type="chain" id="PRO_0000333912" description="Cell division protein ZapB">
    <location>
        <begin position="1"/>
        <end position="80"/>
    </location>
</feature>
<feature type="coiled-coil region" evidence="1">
    <location>
        <begin position="3"/>
        <end position="80"/>
    </location>
</feature>